<accession>A5GPI1</accession>
<protein>
    <recommendedName>
        <fullName evidence="1">tRNA uridine 5-carboxymethylaminomethyl modification enzyme MnmG</fullName>
    </recommendedName>
    <alternativeName>
        <fullName evidence="1">Glucose-inhibited division protein A</fullName>
    </alternativeName>
</protein>
<organism>
    <name type="scientific">Synechococcus sp. (strain WH7803)</name>
    <dbReference type="NCBI Taxonomy" id="32051"/>
    <lineage>
        <taxon>Bacteria</taxon>
        <taxon>Bacillati</taxon>
        <taxon>Cyanobacteriota</taxon>
        <taxon>Cyanophyceae</taxon>
        <taxon>Synechococcales</taxon>
        <taxon>Synechococcaceae</taxon>
        <taxon>Synechococcus</taxon>
    </lineage>
</organism>
<gene>
    <name evidence="1" type="primary">mnmG</name>
    <name evidence="1" type="synonym">gidA</name>
    <name type="ordered locus">SynWH7803_2420</name>
</gene>
<dbReference type="EMBL" id="CT971583">
    <property type="protein sequence ID" value="CAK24846.1"/>
    <property type="molecule type" value="Genomic_DNA"/>
</dbReference>
<dbReference type="SMR" id="A5GPI1"/>
<dbReference type="STRING" id="32051.SynWH7803_2420"/>
<dbReference type="KEGG" id="syx:SynWH7803_2420"/>
<dbReference type="eggNOG" id="COG0445">
    <property type="taxonomic scope" value="Bacteria"/>
</dbReference>
<dbReference type="HOGENOM" id="CLU_007831_2_2_3"/>
<dbReference type="OrthoDB" id="9815560at2"/>
<dbReference type="Proteomes" id="UP000001566">
    <property type="component" value="Chromosome"/>
</dbReference>
<dbReference type="GO" id="GO:0005737">
    <property type="term" value="C:cytoplasm"/>
    <property type="evidence" value="ECO:0007669"/>
    <property type="project" value="UniProtKB-SubCell"/>
</dbReference>
<dbReference type="GO" id="GO:0050660">
    <property type="term" value="F:flavin adenine dinucleotide binding"/>
    <property type="evidence" value="ECO:0007669"/>
    <property type="project" value="UniProtKB-UniRule"/>
</dbReference>
<dbReference type="GO" id="GO:0030488">
    <property type="term" value="P:tRNA methylation"/>
    <property type="evidence" value="ECO:0007669"/>
    <property type="project" value="TreeGrafter"/>
</dbReference>
<dbReference type="GO" id="GO:0002098">
    <property type="term" value="P:tRNA wobble uridine modification"/>
    <property type="evidence" value="ECO:0007669"/>
    <property type="project" value="InterPro"/>
</dbReference>
<dbReference type="FunFam" id="1.10.10.1800:FF:000001">
    <property type="entry name" value="tRNA uridine 5-carboxymethylaminomethyl modification enzyme MnmG"/>
    <property type="match status" value="1"/>
</dbReference>
<dbReference type="FunFam" id="1.10.150.570:FF:000001">
    <property type="entry name" value="tRNA uridine 5-carboxymethylaminomethyl modification enzyme MnmG"/>
    <property type="match status" value="1"/>
</dbReference>
<dbReference type="FunFam" id="3.50.50.60:FF:000002">
    <property type="entry name" value="tRNA uridine 5-carboxymethylaminomethyl modification enzyme MnmG"/>
    <property type="match status" value="1"/>
</dbReference>
<dbReference type="FunFam" id="3.50.50.60:FF:000119">
    <property type="entry name" value="tRNA uridine 5-carboxymethylaminomethyl modification enzyme MnmG"/>
    <property type="match status" value="1"/>
</dbReference>
<dbReference type="Gene3D" id="3.50.50.60">
    <property type="entry name" value="FAD/NAD(P)-binding domain"/>
    <property type="match status" value="2"/>
</dbReference>
<dbReference type="Gene3D" id="1.10.150.570">
    <property type="entry name" value="GidA associated domain, C-terminal subdomain"/>
    <property type="match status" value="1"/>
</dbReference>
<dbReference type="Gene3D" id="1.10.10.1800">
    <property type="entry name" value="tRNA uridine 5-carboxymethylaminomethyl modification enzyme MnmG/GidA"/>
    <property type="match status" value="1"/>
</dbReference>
<dbReference type="HAMAP" id="MF_00129">
    <property type="entry name" value="MnmG_GidA"/>
    <property type="match status" value="1"/>
</dbReference>
<dbReference type="InterPro" id="IPR036188">
    <property type="entry name" value="FAD/NAD-bd_sf"/>
</dbReference>
<dbReference type="InterPro" id="IPR049312">
    <property type="entry name" value="GIDA_C_N"/>
</dbReference>
<dbReference type="InterPro" id="IPR004416">
    <property type="entry name" value="MnmG"/>
</dbReference>
<dbReference type="InterPro" id="IPR002218">
    <property type="entry name" value="MnmG-rel"/>
</dbReference>
<dbReference type="InterPro" id="IPR020595">
    <property type="entry name" value="MnmG-rel_CS"/>
</dbReference>
<dbReference type="InterPro" id="IPR026904">
    <property type="entry name" value="MnmG_C"/>
</dbReference>
<dbReference type="InterPro" id="IPR047001">
    <property type="entry name" value="MnmG_C_subdom"/>
</dbReference>
<dbReference type="InterPro" id="IPR044920">
    <property type="entry name" value="MnmG_C_subdom_sf"/>
</dbReference>
<dbReference type="InterPro" id="IPR040131">
    <property type="entry name" value="MnmG_N"/>
</dbReference>
<dbReference type="NCBIfam" id="TIGR00136">
    <property type="entry name" value="mnmG_gidA"/>
    <property type="match status" value="1"/>
</dbReference>
<dbReference type="PANTHER" id="PTHR11806">
    <property type="entry name" value="GLUCOSE INHIBITED DIVISION PROTEIN A"/>
    <property type="match status" value="1"/>
</dbReference>
<dbReference type="PANTHER" id="PTHR11806:SF0">
    <property type="entry name" value="PROTEIN MTO1 HOMOLOG, MITOCHONDRIAL"/>
    <property type="match status" value="1"/>
</dbReference>
<dbReference type="Pfam" id="PF01134">
    <property type="entry name" value="GIDA"/>
    <property type="match status" value="1"/>
</dbReference>
<dbReference type="Pfam" id="PF21680">
    <property type="entry name" value="GIDA_C_1st"/>
    <property type="match status" value="1"/>
</dbReference>
<dbReference type="Pfam" id="PF13932">
    <property type="entry name" value="SAM_GIDA_C"/>
    <property type="match status" value="1"/>
</dbReference>
<dbReference type="SMART" id="SM01228">
    <property type="entry name" value="GIDA_assoc_3"/>
    <property type="match status" value="1"/>
</dbReference>
<dbReference type="SUPFAM" id="SSF51905">
    <property type="entry name" value="FAD/NAD(P)-binding domain"/>
    <property type="match status" value="1"/>
</dbReference>
<dbReference type="PROSITE" id="PS01280">
    <property type="entry name" value="GIDA_1"/>
    <property type="match status" value="1"/>
</dbReference>
<dbReference type="PROSITE" id="PS01281">
    <property type="entry name" value="GIDA_2"/>
    <property type="match status" value="1"/>
</dbReference>
<comment type="function">
    <text evidence="1">NAD-binding protein involved in the addition of a carboxymethylaminomethyl (cmnm) group at the wobble position (U34) of certain tRNAs, forming tRNA-cmnm(5)s(2)U34.</text>
</comment>
<comment type="cofactor">
    <cofactor evidence="1">
        <name>FAD</name>
        <dbReference type="ChEBI" id="CHEBI:57692"/>
    </cofactor>
</comment>
<comment type="subunit">
    <text evidence="1">Homodimer. Heterotetramer of two MnmE and two MnmG subunits.</text>
</comment>
<comment type="subcellular location">
    <subcellularLocation>
        <location evidence="1">Cytoplasm</location>
    </subcellularLocation>
</comment>
<comment type="similarity">
    <text evidence="1">Belongs to the MnmG family.</text>
</comment>
<proteinExistence type="inferred from homology"/>
<reference key="1">
    <citation type="submission" date="2006-05" db="EMBL/GenBank/DDBJ databases">
        <authorList>
            <consortium name="Genoscope"/>
        </authorList>
    </citation>
    <scope>NUCLEOTIDE SEQUENCE [LARGE SCALE GENOMIC DNA]</scope>
    <source>
        <strain>WH7803</strain>
    </source>
</reference>
<keyword id="KW-0963">Cytoplasm</keyword>
<keyword id="KW-0274">FAD</keyword>
<keyword id="KW-0285">Flavoprotein</keyword>
<keyword id="KW-0520">NAD</keyword>
<keyword id="KW-1185">Reference proteome</keyword>
<keyword id="KW-0819">tRNA processing</keyword>
<feature type="chain" id="PRO_0000345347" description="tRNA uridine 5-carboxymethylaminomethyl modification enzyme MnmG">
    <location>
        <begin position="1"/>
        <end position="659"/>
    </location>
</feature>
<feature type="binding site" evidence="1">
    <location>
        <begin position="17"/>
        <end position="22"/>
    </location>
    <ligand>
        <name>FAD</name>
        <dbReference type="ChEBI" id="CHEBI:57692"/>
    </ligand>
</feature>
<feature type="binding site" evidence="1">
    <location>
        <begin position="293"/>
        <end position="307"/>
    </location>
    <ligand>
        <name>NAD(+)</name>
        <dbReference type="ChEBI" id="CHEBI:57540"/>
    </ligand>
</feature>
<sequence length="659" mass="71979">MANSFSPTEIFDVIVVGGGHAGCEAAITSARLGLNTALFTLNLDRIAWQPCNPAVGGPAKSQLVHEVDALGGVIGRLADATAIQKRILNASRGPAVWALRAQTDKRQYSRQMLQLLQHTPNLALREAMVTGLEIDGDPAGGGEHWDPSQGPAARITGVRTYFGSLYGAKAVVLTAGTFLGGRIWVGHQSMAAGRAGEQAAEGLTEALQQLGFHTDRLKTGTPARVDRRSIALDQLEEQPSDAADRFFSFDPAAWSSGEQMSCHITRTTAATHQLIKDNLHLTAIYGGVIDSKGPRYCPSIEDKIVRFADKDSHQIFLEPEGRDTPEIYVQGFSTGLPEPIQLQLLRSLPGLEQAVMLRPAYSVDYDYLPATQLLPSLETKRVQGLFSAGQLNGTTGYEEAAAQGLVAGLNAARRIRAEEAVHFPREGSYIGTMIDDLVSKDLREPYRVLTSRSEYRLVLRGDNADRRLTPLGRELGLIDDRRWRLFEDKLQAMEAEKQRLEQQRLKVSDPAAPAVEQETGAPIKGSITLADLLRRPGMHAADLVRHGLADAGLPLPVREGAEIDIKYSGYLARQQQQIDQVKRQGRRKLPETIDYASISTLSREAREKLTAVRPLTLGQASQIPGVSQADLTSLLMWLELQQRRSQPSASHLAPTGQAR</sequence>
<name>MNMG_SYNPW</name>
<evidence type="ECO:0000255" key="1">
    <source>
        <dbReference type="HAMAP-Rule" id="MF_00129"/>
    </source>
</evidence>